<dbReference type="EMBL" id="CP000061">
    <property type="protein sequence ID" value="ABC65516.1"/>
    <property type="molecule type" value="Genomic_DNA"/>
</dbReference>
<dbReference type="RefSeq" id="WP_011412680.1">
    <property type="nucleotide sequence ID" value="NC_007716.1"/>
</dbReference>
<dbReference type="SMR" id="Q2NJ77"/>
<dbReference type="STRING" id="322098.AYWB_399"/>
<dbReference type="KEGG" id="ayw:AYWB_399"/>
<dbReference type="eggNOG" id="COG0556">
    <property type="taxonomic scope" value="Bacteria"/>
</dbReference>
<dbReference type="HOGENOM" id="CLU_009621_2_1_14"/>
<dbReference type="OrthoDB" id="9806651at2"/>
<dbReference type="PhylomeDB" id="Q2NJ77"/>
<dbReference type="Proteomes" id="UP000001934">
    <property type="component" value="Chromosome"/>
</dbReference>
<dbReference type="GO" id="GO:0005737">
    <property type="term" value="C:cytoplasm"/>
    <property type="evidence" value="ECO:0007669"/>
    <property type="project" value="UniProtKB-SubCell"/>
</dbReference>
<dbReference type="GO" id="GO:0009380">
    <property type="term" value="C:excinuclease repair complex"/>
    <property type="evidence" value="ECO:0007669"/>
    <property type="project" value="InterPro"/>
</dbReference>
<dbReference type="GO" id="GO:0005524">
    <property type="term" value="F:ATP binding"/>
    <property type="evidence" value="ECO:0007669"/>
    <property type="project" value="UniProtKB-UniRule"/>
</dbReference>
<dbReference type="GO" id="GO:0016887">
    <property type="term" value="F:ATP hydrolysis activity"/>
    <property type="evidence" value="ECO:0007669"/>
    <property type="project" value="InterPro"/>
</dbReference>
<dbReference type="GO" id="GO:0003677">
    <property type="term" value="F:DNA binding"/>
    <property type="evidence" value="ECO:0007669"/>
    <property type="project" value="UniProtKB-UniRule"/>
</dbReference>
<dbReference type="GO" id="GO:0009381">
    <property type="term" value="F:excinuclease ABC activity"/>
    <property type="evidence" value="ECO:0007669"/>
    <property type="project" value="UniProtKB-UniRule"/>
</dbReference>
<dbReference type="GO" id="GO:0004386">
    <property type="term" value="F:helicase activity"/>
    <property type="evidence" value="ECO:0007669"/>
    <property type="project" value="UniProtKB-KW"/>
</dbReference>
<dbReference type="GO" id="GO:0006289">
    <property type="term" value="P:nucleotide-excision repair"/>
    <property type="evidence" value="ECO:0007669"/>
    <property type="project" value="UniProtKB-UniRule"/>
</dbReference>
<dbReference type="GO" id="GO:0009432">
    <property type="term" value="P:SOS response"/>
    <property type="evidence" value="ECO:0007669"/>
    <property type="project" value="UniProtKB-UniRule"/>
</dbReference>
<dbReference type="CDD" id="cd17916">
    <property type="entry name" value="DEXHc_UvrB"/>
    <property type="match status" value="1"/>
</dbReference>
<dbReference type="CDD" id="cd18790">
    <property type="entry name" value="SF2_C_UvrB"/>
    <property type="match status" value="1"/>
</dbReference>
<dbReference type="Gene3D" id="3.40.50.300">
    <property type="entry name" value="P-loop containing nucleotide triphosphate hydrolases"/>
    <property type="match status" value="3"/>
</dbReference>
<dbReference type="Gene3D" id="4.10.860.10">
    <property type="entry name" value="UVR domain"/>
    <property type="match status" value="1"/>
</dbReference>
<dbReference type="HAMAP" id="MF_00204">
    <property type="entry name" value="UvrB"/>
    <property type="match status" value="1"/>
</dbReference>
<dbReference type="InterPro" id="IPR006935">
    <property type="entry name" value="Helicase/UvrB_N"/>
</dbReference>
<dbReference type="InterPro" id="IPR014001">
    <property type="entry name" value="Helicase_ATP-bd"/>
</dbReference>
<dbReference type="InterPro" id="IPR001650">
    <property type="entry name" value="Helicase_C-like"/>
</dbReference>
<dbReference type="InterPro" id="IPR027417">
    <property type="entry name" value="P-loop_NTPase"/>
</dbReference>
<dbReference type="InterPro" id="IPR001943">
    <property type="entry name" value="UVR_dom"/>
</dbReference>
<dbReference type="InterPro" id="IPR036876">
    <property type="entry name" value="UVR_dom_sf"/>
</dbReference>
<dbReference type="InterPro" id="IPR004807">
    <property type="entry name" value="UvrB"/>
</dbReference>
<dbReference type="InterPro" id="IPR041471">
    <property type="entry name" value="UvrB_inter"/>
</dbReference>
<dbReference type="InterPro" id="IPR024759">
    <property type="entry name" value="UvrB_YAD/RRR_dom"/>
</dbReference>
<dbReference type="NCBIfam" id="NF003673">
    <property type="entry name" value="PRK05298.1"/>
    <property type="match status" value="1"/>
</dbReference>
<dbReference type="NCBIfam" id="TIGR00631">
    <property type="entry name" value="uvrb"/>
    <property type="match status" value="1"/>
</dbReference>
<dbReference type="PANTHER" id="PTHR24029">
    <property type="entry name" value="UVRABC SYSTEM PROTEIN B"/>
    <property type="match status" value="1"/>
</dbReference>
<dbReference type="PANTHER" id="PTHR24029:SF0">
    <property type="entry name" value="UVRABC SYSTEM PROTEIN B"/>
    <property type="match status" value="1"/>
</dbReference>
<dbReference type="Pfam" id="PF00271">
    <property type="entry name" value="Helicase_C"/>
    <property type="match status" value="1"/>
</dbReference>
<dbReference type="Pfam" id="PF04851">
    <property type="entry name" value="ResIII"/>
    <property type="match status" value="1"/>
</dbReference>
<dbReference type="Pfam" id="PF02151">
    <property type="entry name" value="UVR"/>
    <property type="match status" value="1"/>
</dbReference>
<dbReference type="Pfam" id="PF12344">
    <property type="entry name" value="UvrB"/>
    <property type="match status" value="1"/>
</dbReference>
<dbReference type="Pfam" id="PF17757">
    <property type="entry name" value="UvrB_inter"/>
    <property type="match status" value="1"/>
</dbReference>
<dbReference type="SMART" id="SM00487">
    <property type="entry name" value="DEXDc"/>
    <property type="match status" value="1"/>
</dbReference>
<dbReference type="SMART" id="SM00490">
    <property type="entry name" value="HELICc"/>
    <property type="match status" value="1"/>
</dbReference>
<dbReference type="SUPFAM" id="SSF46600">
    <property type="entry name" value="C-terminal UvrC-binding domain of UvrB"/>
    <property type="match status" value="1"/>
</dbReference>
<dbReference type="SUPFAM" id="SSF52540">
    <property type="entry name" value="P-loop containing nucleoside triphosphate hydrolases"/>
    <property type="match status" value="2"/>
</dbReference>
<dbReference type="PROSITE" id="PS51192">
    <property type="entry name" value="HELICASE_ATP_BIND_1"/>
    <property type="match status" value="1"/>
</dbReference>
<dbReference type="PROSITE" id="PS51194">
    <property type="entry name" value="HELICASE_CTER"/>
    <property type="match status" value="1"/>
</dbReference>
<dbReference type="PROSITE" id="PS50151">
    <property type="entry name" value="UVR"/>
    <property type="match status" value="1"/>
</dbReference>
<comment type="function">
    <text evidence="1">The UvrABC repair system catalyzes the recognition and processing of DNA lesions. A damage recognition complex composed of 2 UvrA and 2 UvrB subunits scans DNA for abnormalities. Upon binding of the UvrA(2)B(2) complex to a putative damaged site, the DNA wraps around one UvrB monomer. DNA wrap is dependent on ATP binding by UvrB and probably causes local melting of the DNA helix, facilitating insertion of UvrB beta-hairpin between the DNA strands. Then UvrB probes one DNA strand for the presence of a lesion. If a lesion is found the UvrA subunits dissociate and the UvrB-DNA preincision complex is formed. This complex is subsequently bound by UvrC and the second UvrB is released. If no lesion is found, the DNA wraps around the other UvrB subunit that will check the other stand for damage.</text>
</comment>
<comment type="subunit">
    <text evidence="1">Forms a heterotetramer with UvrA during the search for lesions. Interacts with UvrC in an incision complex.</text>
</comment>
<comment type="subcellular location">
    <subcellularLocation>
        <location evidence="1">Cytoplasm</location>
    </subcellularLocation>
</comment>
<comment type="domain">
    <text evidence="1">The beta-hairpin motif is involved in DNA binding.</text>
</comment>
<comment type="similarity">
    <text evidence="1">Belongs to the UvrB family.</text>
</comment>
<gene>
    <name evidence="1" type="primary">uvrB</name>
    <name type="ordered locus">AYWB_399</name>
</gene>
<proteinExistence type="inferred from homology"/>
<reference key="1">
    <citation type="journal article" date="2006" name="J. Bacteriol.">
        <title>Living with genome instability: the adaptation of phytoplasmas to diverse environments of their insect and plant hosts.</title>
        <authorList>
            <person name="Bai X."/>
            <person name="Zhang J."/>
            <person name="Ewing A."/>
            <person name="Miller S.A."/>
            <person name="Jancso Radek A."/>
            <person name="Shevchenko D.V."/>
            <person name="Tsukerman K."/>
            <person name="Walunas T."/>
            <person name="Lapidus A."/>
            <person name="Campbell J.W."/>
            <person name="Hogenhout S.A."/>
        </authorList>
    </citation>
    <scope>NUCLEOTIDE SEQUENCE [LARGE SCALE GENOMIC DNA]</scope>
    <source>
        <strain>AYWB</strain>
    </source>
</reference>
<organism>
    <name type="scientific">Aster yellows witches'-broom phytoplasma (strain AYWB)</name>
    <dbReference type="NCBI Taxonomy" id="322098"/>
    <lineage>
        <taxon>Bacteria</taxon>
        <taxon>Bacillati</taxon>
        <taxon>Mycoplasmatota</taxon>
        <taxon>Mollicutes</taxon>
        <taxon>Acholeplasmatales</taxon>
        <taxon>Acholeplasmataceae</taxon>
        <taxon>Candidatus Phytoplasma</taxon>
        <taxon>16SrI (Aster yellows group)</taxon>
    </lineage>
</organism>
<name>UVRB_AYWBP</name>
<accession>Q2NJ77</accession>
<evidence type="ECO:0000255" key="1">
    <source>
        <dbReference type="HAMAP-Rule" id="MF_00204"/>
    </source>
</evidence>
<protein>
    <recommendedName>
        <fullName evidence="1">UvrABC system protein B</fullName>
        <shortName evidence="1">Protein UvrB</shortName>
    </recommendedName>
    <alternativeName>
        <fullName evidence="1">Excinuclease ABC subunit B</fullName>
    </alternativeName>
</protein>
<feature type="chain" id="PRO_1000077866" description="UvrABC system protein B">
    <location>
        <begin position="1"/>
        <end position="667"/>
    </location>
</feature>
<feature type="domain" description="Helicase ATP-binding" evidence="1">
    <location>
        <begin position="28"/>
        <end position="185"/>
    </location>
</feature>
<feature type="domain" description="Helicase C-terminal" evidence="1">
    <location>
        <begin position="432"/>
        <end position="594"/>
    </location>
</feature>
<feature type="domain" description="UVR" evidence="1">
    <location>
        <begin position="629"/>
        <end position="664"/>
    </location>
</feature>
<feature type="short sequence motif" description="Beta-hairpin">
    <location>
        <begin position="94"/>
        <end position="117"/>
    </location>
</feature>
<feature type="binding site" evidence="1">
    <location>
        <begin position="41"/>
        <end position="48"/>
    </location>
    <ligand>
        <name>ATP</name>
        <dbReference type="ChEBI" id="CHEBI:30616"/>
    </ligand>
</feature>
<keyword id="KW-0067">ATP-binding</keyword>
<keyword id="KW-0963">Cytoplasm</keyword>
<keyword id="KW-0227">DNA damage</keyword>
<keyword id="KW-0228">DNA excision</keyword>
<keyword id="KW-0234">DNA repair</keyword>
<keyword id="KW-0267">Excision nuclease</keyword>
<keyword id="KW-0347">Helicase</keyword>
<keyword id="KW-0378">Hydrolase</keyword>
<keyword id="KW-0547">Nucleotide-binding</keyword>
<keyword id="KW-0742">SOS response</keyword>
<sequence length="667" mass="76529">MSLTNLFKLQSSLKPSGDQPQAIQKLVNNFKQGLKEQILLGATGTGKTFTIANIIQHLQQKTLVIAHNKTLAGQLYNELKAMFPNNRVEYFISYYDYYQPEAYVASSDTYIEKDSKINDEIDQLRHSAAGSLINRDDVIVVASVSCIYGVGDLKDYQKSTLHLQIGDKYERKNLINKLIELKYQRNEINFQRGTFRVRGDIIEIIASSSKEIGIRIIFFGNEIENIQNFYVLNGKAIANLKLITLFPASLYATNNQKLQESIKRIRQELKEQINHFEKTNQLLAAQKIKMRTLHDLEMLEQIGNCNGVENYSRHLALKGKGEAPSTLIDFFGNDFLTIVDESHVTIPQIKGMYFGDFSRKNNLVNFGFRLPSALDNRPLKFNEFQEKMNKVIYLSATPGDYELTKKIPIVEQIIRPTFVLDPEIEVRPTNNQMDDLYFEIKHQTKNNQRILITTLTINMSEDLTTYLKNLGIKVAYLHSEIKSLQRLEILKDLRLGKYDCLVGVNLLREGLDLPEVALVAILDADKQGFLRNERSLIQTIGRAARNITGKAIMYADCISPAMQIAIEETYRRRKIQKQYNETMKVTPTALNKTILETISIKQKERIKNEKGKSKVQKKLQINTNMTAKNKEIKRLQKTMKEAAKALDFEKAATLRDLILDLEKKEKR</sequence>